<comment type="subunit">
    <text evidence="1">Component of the small ribosomal subunit. Mature ribosomes consist of a small (40S) and a large (60S) subunit. The 40S subunit contains about 33 different proteins and 1 molecule of RNA (18S). The 60S subunit contains about 49 different proteins and 3 molecules of RNA (28S, 5.8S and 5S).</text>
</comment>
<comment type="subcellular location">
    <subcellularLocation>
        <location evidence="1">Cytoplasm</location>
    </subcellularLocation>
</comment>
<comment type="similarity">
    <text evidence="1">Belongs to the eukaryotic ribosomal protein eS1 family.</text>
</comment>
<reference key="1">
    <citation type="journal article" date="2003" name="Bioinformatics">
        <title>Annotation pattern of ESTs from Spodoptera frugiperda Sf9 cells and analysis of the ribosomal protein genes reveal insect-specific features and unexpectedly low codon usage bias.</title>
        <authorList>
            <person name="Landais I."/>
            <person name="Ogliastro M."/>
            <person name="Mita K."/>
            <person name="Nohata J."/>
            <person name="Lopez-Ferber M."/>
            <person name="Duonor-Cerutti M."/>
            <person name="Shimada T."/>
            <person name="Fournier P."/>
            <person name="Devauchelle G."/>
        </authorList>
    </citation>
    <scope>NUCLEOTIDE SEQUENCE [LARGE SCALE MRNA]</scope>
</reference>
<feature type="initiator methionine" description="Removed" evidence="1">
    <location>
        <position position="1"/>
    </location>
</feature>
<feature type="chain" id="PRO_0000389318" description="Small ribosomal subunit protein eS1">
    <location>
        <begin position="2"/>
        <end position="264"/>
    </location>
</feature>
<feature type="region of interest" description="Disordered" evidence="2">
    <location>
        <begin position="236"/>
        <end position="264"/>
    </location>
</feature>
<feature type="compositionally biased region" description="Basic and acidic residues" evidence="2">
    <location>
        <begin position="236"/>
        <end position="255"/>
    </location>
</feature>
<dbReference type="EMBL" id="AF429977">
    <property type="protein sequence ID" value="AAL26579.1"/>
    <property type="molecule type" value="mRNA"/>
</dbReference>
<dbReference type="RefSeq" id="XP_035456172.1">
    <property type="nucleotide sequence ID" value="XM_035600279.2"/>
</dbReference>
<dbReference type="SMR" id="Q95V35"/>
<dbReference type="EnsemblMetazoa" id="XM_035600279.2">
    <property type="protein sequence ID" value="XP_035456172.1"/>
    <property type="gene ID" value="LOC118280314"/>
</dbReference>
<dbReference type="GeneID" id="118280314"/>
<dbReference type="OrthoDB" id="9834376at2759"/>
<dbReference type="Proteomes" id="UP000829999">
    <property type="component" value="Chromosome 21"/>
</dbReference>
<dbReference type="GO" id="GO:0022627">
    <property type="term" value="C:cytosolic small ribosomal subunit"/>
    <property type="evidence" value="ECO:0007669"/>
    <property type="project" value="UniProtKB-UniRule"/>
</dbReference>
<dbReference type="GO" id="GO:0003735">
    <property type="term" value="F:structural constituent of ribosome"/>
    <property type="evidence" value="ECO:0007669"/>
    <property type="project" value="UniProtKB-UniRule"/>
</dbReference>
<dbReference type="GO" id="GO:0006412">
    <property type="term" value="P:translation"/>
    <property type="evidence" value="ECO:0007669"/>
    <property type="project" value="UniProtKB-UniRule"/>
</dbReference>
<dbReference type="HAMAP" id="MF_03122">
    <property type="entry name" value="Ribosomal_eS1_euk"/>
    <property type="match status" value="1"/>
</dbReference>
<dbReference type="InterPro" id="IPR001593">
    <property type="entry name" value="Ribosomal_eS1"/>
</dbReference>
<dbReference type="InterPro" id="IPR018281">
    <property type="entry name" value="Ribosomal_eS1_CS"/>
</dbReference>
<dbReference type="InterPro" id="IPR027500">
    <property type="entry name" value="Ribosomal_eS1_euk"/>
</dbReference>
<dbReference type="PANTHER" id="PTHR11830">
    <property type="entry name" value="40S RIBOSOMAL PROTEIN S3A"/>
    <property type="match status" value="1"/>
</dbReference>
<dbReference type="Pfam" id="PF01015">
    <property type="entry name" value="Ribosomal_S3Ae"/>
    <property type="match status" value="1"/>
</dbReference>
<dbReference type="SMART" id="SM01397">
    <property type="entry name" value="Ribosomal_S3Ae"/>
    <property type="match status" value="1"/>
</dbReference>
<dbReference type="PROSITE" id="PS01191">
    <property type="entry name" value="RIBOSOMAL_S3AE"/>
    <property type="match status" value="1"/>
</dbReference>
<keyword id="KW-0963">Cytoplasm</keyword>
<keyword id="KW-0687">Ribonucleoprotein</keyword>
<keyword id="KW-0689">Ribosomal protein</keyword>
<organism>
    <name type="scientific">Spodoptera frugiperda</name>
    <name type="common">Fall armyworm</name>
    <dbReference type="NCBI Taxonomy" id="7108"/>
    <lineage>
        <taxon>Eukaryota</taxon>
        <taxon>Metazoa</taxon>
        <taxon>Ecdysozoa</taxon>
        <taxon>Arthropoda</taxon>
        <taxon>Hexapoda</taxon>
        <taxon>Insecta</taxon>
        <taxon>Pterygota</taxon>
        <taxon>Neoptera</taxon>
        <taxon>Endopterygota</taxon>
        <taxon>Lepidoptera</taxon>
        <taxon>Glossata</taxon>
        <taxon>Ditrysia</taxon>
        <taxon>Noctuoidea</taxon>
        <taxon>Noctuidae</taxon>
        <taxon>Amphipyrinae</taxon>
        <taxon>Spodoptera</taxon>
    </lineage>
</organism>
<sequence length="264" mass="29907">MAVGKNKGLSKGGKKGVKKKIVDPFTRKDWYDVKAPSMFTKRQVGTTLVNRTQGTKIASEGLKGRVFEVSLADLQADTDAERSFRKFRLIAEDVQGRNVLCNFHGMDLTTDKLRWMVKKWQTLVEANIDVKTTDGYLLRVFCIGFTNKDSLSQRKTCYAQHTQVRAIRKKMCEIITRDVTNSELREVVNKLIPDSIAKDIEKACHGIYPLRDVCIRKVKVLKRPRFEISKLMELHGEGGSGKRGEAGDKSERPEGYEPPVQESV</sequence>
<protein>
    <recommendedName>
        <fullName evidence="1">Small ribosomal subunit protein eS1</fullName>
    </recommendedName>
    <alternativeName>
        <fullName evidence="3">40S ribosomal protein S3a</fullName>
    </alternativeName>
</protein>
<name>RS3A_SPOFR</name>
<accession>Q95V35</accession>
<evidence type="ECO:0000255" key="1">
    <source>
        <dbReference type="HAMAP-Rule" id="MF_03122"/>
    </source>
</evidence>
<evidence type="ECO:0000256" key="2">
    <source>
        <dbReference type="SAM" id="MobiDB-lite"/>
    </source>
</evidence>
<evidence type="ECO:0000305" key="3"/>
<proteinExistence type="evidence at transcript level"/>